<protein>
    <recommendedName>
        <fullName>Elongation factor P</fullName>
        <shortName>EF-P</shortName>
    </recommendedName>
</protein>
<reference key="1">
    <citation type="journal article" date="2002" name="Proc. Natl. Acad. Sci. U.S.A.">
        <title>Genome sequence of a serotype M3 strain of group A Streptococcus: phage-encoded toxins, the high-virulence phenotype, and clone emergence.</title>
        <authorList>
            <person name="Beres S.B."/>
            <person name="Sylva G.L."/>
            <person name="Barbian K.D."/>
            <person name="Lei B."/>
            <person name="Hoff J.S."/>
            <person name="Mammarella N.D."/>
            <person name="Liu M.-Y."/>
            <person name="Smoot J.C."/>
            <person name="Porcella S.F."/>
            <person name="Parkins L.D."/>
            <person name="Campbell D.S."/>
            <person name="Smith T.M."/>
            <person name="McCormick J.K."/>
            <person name="Leung D.Y.M."/>
            <person name="Schlievert P.M."/>
            <person name="Musser J.M."/>
        </authorList>
    </citation>
    <scope>NUCLEOTIDE SEQUENCE [LARGE SCALE GENOMIC DNA]</scope>
    <source>
        <strain>ATCC BAA-595 / MGAS315</strain>
    </source>
</reference>
<accession>P0DA86</accession>
<accession>P68774</accession>
<accession>P82459</accession>
<keyword id="KW-0963">Cytoplasm</keyword>
<keyword id="KW-0251">Elongation factor</keyword>
<keyword id="KW-0648">Protein biosynthesis</keyword>
<evidence type="ECO:0000250" key="1"/>
<evidence type="ECO:0000305" key="2"/>
<sequence>MIEASKLKAGMTFEAEGKLIRVLEASHHKPGKGNTIMRMKLRDVRTGSTFDTTYRPDEKFEQAIIETVPAQYLYKMDDTAYFMNTDTYDQYEIPVANVEQELLYILENSDVKIQFYGSEVIGVTVPTTVELTVAETQPSIKGATVTGSGKPATLETGLVVNVPDFIEAGQKLIINTAEGTYVSRA</sequence>
<comment type="function">
    <text evidence="1">Involved in peptide bond synthesis. Stimulates efficient translation and peptide-bond synthesis on native or reconstituted 70S ribosomes in vitro. Probably functions indirectly by altering the affinity of the ribosome for aminoacyl-tRNA, thus increasing their reactivity as acceptors for peptidyl transferase (By similarity).</text>
</comment>
<comment type="pathway">
    <text>Protein biosynthesis; polypeptide chain elongation.</text>
</comment>
<comment type="subcellular location">
    <subcellularLocation>
        <location evidence="1">Cytoplasm</location>
    </subcellularLocation>
</comment>
<comment type="similarity">
    <text evidence="2">Belongs to the elongation factor P family.</text>
</comment>
<proteinExistence type="inferred from homology"/>
<dbReference type="EMBL" id="AE014074">
    <property type="protein sequence ID" value="AAM80181.1"/>
    <property type="molecule type" value="Genomic_DNA"/>
</dbReference>
<dbReference type="RefSeq" id="WP_002988496.1">
    <property type="nucleotide sequence ID" value="NC_004070.1"/>
</dbReference>
<dbReference type="SMR" id="P0DA86"/>
<dbReference type="GeneID" id="69900351"/>
<dbReference type="KEGG" id="spg:SpyM3_1574"/>
<dbReference type="HOGENOM" id="CLU_074944_3_0_9"/>
<dbReference type="UniPathway" id="UPA00345"/>
<dbReference type="Proteomes" id="UP000000564">
    <property type="component" value="Chromosome"/>
</dbReference>
<dbReference type="GO" id="GO:0005737">
    <property type="term" value="C:cytoplasm"/>
    <property type="evidence" value="ECO:0007669"/>
    <property type="project" value="UniProtKB-SubCell"/>
</dbReference>
<dbReference type="GO" id="GO:0003746">
    <property type="term" value="F:translation elongation factor activity"/>
    <property type="evidence" value="ECO:0007669"/>
    <property type="project" value="UniProtKB-UniRule"/>
</dbReference>
<dbReference type="GO" id="GO:0043043">
    <property type="term" value="P:peptide biosynthetic process"/>
    <property type="evidence" value="ECO:0007669"/>
    <property type="project" value="InterPro"/>
</dbReference>
<dbReference type="CDD" id="cd04470">
    <property type="entry name" value="S1_EF-P_repeat_1"/>
    <property type="match status" value="1"/>
</dbReference>
<dbReference type="CDD" id="cd05794">
    <property type="entry name" value="S1_EF-P_repeat_2"/>
    <property type="match status" value="1"/>
</dbReference>
<dbReference type="FunFam" id="2.30.30.30:FF:000003">
    <property type="entry name" value="Elongation factor P"/>
    <property type="match status" value="1"/>
</dbReference>
<dbReference type="FunFam" id="2.40.50.140:FF:000004">
    <property type="entry name" value="Elongation factor P"/>
    <property type="match status" value="1"/>
</dbReference>
<dbReference type="FunFam" id="2.40.50.140:FF:000009">
    <property type="entry name" value="Elongation factor P"/>
    <property type="match status" value="1"/>
</dbReference>
<dbReference type="Gene3D" id="2.30.30.30">
    <property type="match status" value="1"/>
</dbReference>
<dbReference type="Gene3D" id="2.40.50.140">
    <property type="entry name" value="Nucleic acid-binding proteins"/>
    <property type="match status" value="2"/>
</dbReference>
<dbReference type="HAMAP" id="MF_00141">
    <property type="entry name" value="EF_P"/>
    <property type="match status" value="1"/>
</dbReference>
<dbReference type="InterPro" id="IPR015365">
    <property type="entry name" value="Elong-fact-P_C"/>
</dbReference>
<dbReference type="InterPro" id="IPR012340">
    <property type="entry name" value="NA-bd_OB-fold"/>
</dbReference>
<dbReference type="InterPro" id="IPR014722">
    <property type="entry name" value="Rib_uL2_dom2"/>
</dbReference>
<dbReference type="InterPro" id="IPR020599">
    <property type="entry name" value="Transl_elong_fac_P/YeiP"/>
</dbReference>
<dbReference type="InterPro" id="IPR013185">
    <property type="entry name" value="Transl_elong_KOW-like"/>
</dbReference>
<dbReference type="InterPro" id="IPR001059">
    <property type="entry name" value="Transl_elong_P/YeiP_cen"/>
</dbReference>
<dbReference type="InterPro" id="IPR013852">
    <property type="entry name" value="Transl_elong_P/YeiP_CS"/>
</dbReference>
<dbReference type="InterPro" id="IPR011768">
    <property type="entry name" value="Transl_elongation_fac_P"/>
</dbReference>
<dbReference type="InterPro" id="IPR008991">
    <property type="entry name" value="Translation_prot_SH3-like_sf"/>
</dbReference>
<dbReference type="NCBIfam" id="TIGR00038">
    <property type="entry name" value="efp"/>
    <property type="match status" value="1"/>
</dbReference>
<dbReference type="NCBIfam" id="NF001810">
    <property type="entry name" value="PRK00529.1"/>
    <property type="match status" value="1"/>
</dbReference>
<dbReference type="PANTHER" id="PTHR30053">
    <property type="entry name" value="ELONGATION FACTOR P"/>
    <property type="match status" value="1"/>
</dbReference>
<dbReference type="PANTHER" id="PTHR30053:SF12">
    <property type="entry name" value="ELONGATION FACTOR P (EF-P) FAMILY PROTEIN"/>
    <property type="match status" value="1"/>
</dbReference>
<dbReference type="Pfam" id="PF01132">
    <property type="entry name" value="EFP"/>
    <property type="match status" value="1"/>
</dbReference>
<dbReference type="Pfam" id="PF08207">
    <property type="entry name" value="EFP_N"/>
    <property type="match status" value="1"/>
</dbReference>
<dbReference type="Pfam" id="PF09285">
    <property type="entry name" value="Elong-fact-P_C"/>
    <property type="match status" value="1"/>
</dbReference>
<dbReference type="PIRSF" id="PIRSF005901">
    <property type="entry name" value="EF-P"/>
    <property type="match status" value="1"/>
</dbReference>
<dbReference type="SMART" id="SM01185">
    <property type="entry name" value="EFP"/>
    <property type="match status" value="1"/>
</dbReference>
<dbReference type="SMART" id="SM00841">
    <property type="entry name" value="Elong-fact-P_C"/>
    <property type="match status" value="1"/>
</dbReference>
<dbReference type="SUPFAM" id="SSF50249">
    <property type="entry name" value="Nucleic acid-binding proteins"/>
    <property type="match status" value="2"/>
</dbReference>
<dbReference type="SUPFAM" id="SSF50104">
    <property type="entry name" value="Translation proteins SH3-like domain"/>
    <property type="match status" value="1"/>
</dbReference>
<dbReference type="PROSITE" id="PS01275">
    <property type="entry name" value="EFP"/>
    <property type="match status" value="1"/>
</dbReference>
<feature type="chain" id="PRO_0000094344" description="Elongation factor P">
    <location>
        <begin position="1"/>
        <end position="185"/>
    </location>
</feature>
<gene>
    <name type="primary">efp</name>
    <name type="ordered locus">SpyM3_1574</name>
</gene>
<name>EFP_STRP3</name>
<organism>
    <name type="scientific">Streptococcus pyogenes serotype M3 (strain ATCC BAA-595 / MGAS315)</name>
    <dbReference type="NCBI Taxonomy" id="198466"/>
    <lineage>
        <taxon>Bacteria</taxon>
        <taxon>Bacillati</taxon>
        <taxon>Bacillota</taxon>
        <taxon>Bacilli</taxon>
        <taxon>Lactobacillales</taxon>
        <taxon>Streptococcaceae</taxon>
        <taxon>Streptococcus</taxon>
    </lineage>
</organism>